<keyword id="KW-0002">3D-structure</keyword>
<keyword id="KW-0150">Chloroplast</keyword>
<keyword id="KW-0472">Membrane</keyword>
<keyword id="KW-0934">Plastid</keyword>
<keyword id="KW-1001">Plastid inner membrane</keyword>
<keyword id="KW-0653">Protein transport</keyword>
<keyword id="KW-1185">Reference proteome</keyword>
<keyword id="KW-0809">Transit peptide</keyword>
<keyword id="KW-0812">Transmembrane</keyword>
<keyword id="KW-1133">Transmembrane helix</keyword>
<keyword id="KW-0813">Transport</keyword>
<reference key="1">
    <citation type="journal article" date="2000" name="Nature">
        <title>Sequence and analysis of chromosome 1 of the plant Arabidopsis thaliana.</title>
        <authorList>
            <person name="Theologis A."/>
            <person name="Ecker J.R."/>
            <person name="Palm C.J."/>
            <person name="Federspiel N.A."/>
            <person name="Kaul S."/>
            <person name="White O."/>
            <person name="Alonso J."/>
            <person name="Altafi H."/>
            <person name="Araujo R."/>
            <person name="Bowman C.L."/>
            <person name="Brooks S.Y."/>
            <person name="Buehler E."/>
            <person name="Chan A."/>
            <person name="Chao Q."/>
            <person name="Chen H."/>
            <person name="Cheuk R.F."/>
            <person name="Chin C.W."/>
            <person name="Chung M.K."/>
            <person name="Conn L."/>
            <person name="Conway A.B."/>
            <person name="Conway A.R."/>
            <person name="Creasy T.H."/>
            <person name="Dewar K."/>
            <person name="Dunn P."/>
            <person name="Etgu P."/>
            <person name="Feldblyum T.V."/>
            <person name="Feng J.-D."/>
            <person name="Fong B."/>
            <person name="Fujii C.Y."/>
            <person name="Gill J.E."/>
            <person name="Goldsmith A.D."/>
            <person name="Haas B."/>
            <person name="Hansen N.F."/>
            <person name="Hughes B."/>
            <person name="Huizar L."/>
            <person name="Hunter J.L."/>
            <person name="Jenkins J."/>
            <person name="Johnson-Hopson C."/>
            <person name="Khan S."/>
            <person name="Khaykin E."/>
            <person name="Kim C.J."/>
            <person name="Koo H.L."/>
            <person name="Kremenetskaia I."/>
            <person name="Kurtz D.B."/>
            <person name="Kwan A."/>
            <person name="Lam B."/>
            <person name="Langin-Hooper S."/>
            <person name="Lee A."/>
            <person name="Lee J.M."/>
            <person name="Lenz C.A."/>
            <person name="Li J.H."/>
            <person name="Li Y.-P."/>
            <person name="Lin X."/>
            <person name="Liu S.X."/>
            <person name="Liu Z.A."/>
            <person name="Luros J.S."/>
            <person name="Maiti R."/>
            <person name="Marziali A."/>
            <person name="Militscher J."/>
            <person name="Miranda M."/>
            <person name="Nguyen M."/>
            <person name="Nierman W.C."/>
            <person name="Osborne B.I."/>
            <person name="Pai G."/>
            <person name="Peterson J."/>
            <person name="Pham P.K."/>
            <person name="Rizzo M."/>
            <person name="Rooney T."/>
            <person name="Rowley D."/>
            <person name="Sakano H."/>
            <person name="Salzberg S.L."/>
            <person name="Schwartz J.R."/>
            <person name="Shinn P."/>
            <person name="Southwick A.M."/>
            <person name="Sun H."/>
            <person name="Tallon L.J."/>
            <person name="Tambunga G."/>
            <person name="Toriumi M.J."/>
            <person name="Town C.D."/>
            <person name="Utterback T."/>
            <person name="Van Aken S."/>
            <person name="Vaysberg M."/>
            <person name="Vysotskaia V.S."/>
            <person name="Walker M."/>
            <person name="Wu D."/>
            <person name="Yu G."/>
            <person name="Fraser C.M."/>
            <person name="Venter J.C."/>
            <person name="Davis R.W."/>
        </authorList>
    </citation>
    <scope>NUCLEOTIDE SEQUENCE [LARGE SCALE GENOMIC DNA]</scope>
    <source>
        <strain>cv. Columbia</strain>
    </source>
</reference>
<reference key="2">
    <citation type="journal article" date="2017" name="Plant J.">
        <title>Araport11: a complete reannotation of the Arabidopsis thaliana reference genome.</title>
        <authorList>
            <person name="Cheng C.Y."/>
            <person name="Krishnakumar V."/>
            <person name="Chan A.P."/>
            <person name="Thibaud-Nissen F."/>
            <person name="Schobel S."/>
            <person name="Town C.D."/>
        </authorList>
    </citation>
    <scope>GENOME REANNOTATION</scope>
    <source>
        <strain>cv. Columbia</strain>
    </source>
</reference>
<reference key="3">
    <citation type="journal article" date="2003" name="Science">
        <title>Empirical analysis of transcriptional activity in the Arabidopsis genome.</title>
        <authorList>
            <person name="Yamada K."/>
            <person name="Lim J."/>
            <person name="Dale J.M."/>
            <person name="Chen H."/>
            <person name="Shinn P."/>
            <person name="Palm C.J."/>
            <person name="Southwick A.M."/>
            <person name="Wu H.C."/>
            <person name="Kim C.J."/>
            <person name="Nguyen M."/>
            <person name="Pham P.K."/>
            <person name="Cheuk R.F."/>
            <person name="Karlin-Newmann G."/>
            <person name="Liu S.X."/>
            <person name="Lam B."/>
            <person name="Sakano H."/>
            <person name="Wu T."/>
            <person name="Yu G."/>
            <person name="Miranda M."/>
            <person name="Quach H.L."/>
            <person name="Tripp M."/>
            <person name="Chang C.H."/>
            <person name="Lee J.M."/>
            <person name="Toriumi M.J."/>
            <person name="Chan M.M."/>
            <person name="Tang C.C."/>
            <person name="Onodera C.S."/>
            <person name="Deng J.M."/>
            <person name="Akiyama K."/>
            <person name="Ansari Y."/>
            <person name="Arakawa T."/>
            <person name="Banh J."/>
            <person name="Banno F."/>
            <person name="Bowser L."/>
            <person name="Brooks S.Y."/>
            <person name="Carninci P."/>
            <person name="Chao Q."/>
            <person name="Choy N."/>
            <person name="Enju A."/>
            <person name="Goldsmith A.D."/>
            <person name="Gurjal M."/>
            <person name="Hansen N.F."/>
            <person name="Hayashizaki Y."/>
            <person name="Johnson-Hopson C."/>
            <person name="Hsuan V.W."/>
            <person name="Iida K."/>
            <person name="Karnes M."/>
            <person name="Khan S."/>
            <person name="Koesema E."/>
            <person name="Ishida J."/>
            <person name="Jiang P.X."/>
            <person name="Jones T."/>
            <person name="Kawai J."/>
            <person name="Kamiya A."/>
            <person name="Meyers C."/>
            <person name="Nakajima M."/>
            <person name="Narusaka M."/>
            <person name="Seki M."/>
            <person name="Sakurai T."/>
            <person name="Satou M."/>
            <person name="Tamse R."/>
            <person name="Vaysberg M."/>
            <person name="Wallender E.K."/>
            <person name="Wong C."/>
            <person name="Yamamura Y."/>
            <person name="Yuan S."/>
            <person name="Shinozaki K."/>
            <person name="Davis R.W."/>
            <person name="Theologis A."/>
            <person name="Ecker J.R."/>
        </authorList>
    </citation>
    <scope>NUCLEOTIDE SEQUENCE [LARGE SCALE MRNA]</scope>
    <source>
        <strain>cv. Columbia</strain>
    </source>
</reference>
<reference key="4">
    <citation type="journal article" date="2002" name="Plant Cell">
        <title>In vivo analysis of the role of atTic20 in protein import into chloroplasts.</title>
        <authorList>
            <person name="Chen X."/>
            <person name="Smith M.D."/>
            <person name="Fitzpatrick L."/>
            <person name="Schnell D.J."/>
        </authorList>
    </citation>
    <scope>FUNCTION</scope>
    <scope>SUBCELLULAR LOCATION</scope>
    <scope>TISSUE SPECIFICITY</scope>
    <scope>DEVELOPMENTAL STAGE</scope>
</reference>
<reference key="5">
    <citation type="journal article" date="2004" name="J. Biol. Chem.">
        <title>The protein translocon of the plastid envelopes.</title>
        <authorList>
            <person name="Vojta A."/>
            <person name="Alavi M."/>
            <person name="Becker T."/>
            <person name="Hoermann F."/>
            <person name="Kuechler M."/>
            <person name="Soll J."/>
            <person name="Thomson R."/>
            <person name="Schleiff E."/>
        </authorList>
    </citation>
    <scope>TISSUE SPECIFICITY</scope>
</reference>
<reference key="6">
    <citation type="journal article" date="2006" name="Plant Cell">
        <title>Tic21 is an essential translocon component for protein translocation across the chloroplast inner envelope membrane.</title>
        <authorList>
            <person name="Teng Y.S."/>
            <person name="Su Y.S."/>
            <person name="Chen L.J."/>
            <person name="Lee Y.J."/>
            <person name="Hwang I."/>
            <person name="Li H.M."/>
        </authorList>
    </citation>
    <scope>DISRUPTION PHENOTYPE</scope>
</reference>
<reference key="7">
    <citation type="journal article" date="2009" name="Plant Cell">
        <title>A 1-megadalton translocation complex containing Tic20 and Tic21 mediates chloroplast protein import at the inner envelope membrane.</title>
        <authorList>
            <person name="Kikuchi S."/>
            <person name="Oishi M."/>
            <person name="Hirabayashi Y."/>
            <person name="Lee D.W."/>
            <person name="Hwang I."/>
            <person name="Nakai M."/>
        </authorList>
    </citation>
    <scope>FUNCTION</scope>
    <scope>INTERACTION WITH TIC21 AND PRE-PROTEIN</scope>
    <scope>DISRUPTION PHENOTYPE</scope>
</reference>
<reference key="8">
    <citation type="journal article" date="2011" name="Plant Cell Physiol.">
        <title>In vivo studies on the roles of two closely related Arabidopsis Tic20 proteins, AtTic20-I and AtTic20-IV.</title>
        <authorList>
            <person name="Hirabayashi Y."/>
            <person name="Kikuchi S."/>
            <person name="Oishi M."/>
            <person name="Nakai M."/>
        </authorList>
    </citation>
    <scope>FUNCTION</scope>
    <scope>DISRUPTION PHENOTYPE</scope>
    <scope>TISSUE SPECIFICITY</scope>
</reference>
<reference key="9">
    <citation type="journal article" date="2011" name="Plant J.">
        <title>Molecular and genetic analyses of Tic20 homologues in Arabidopsis thaliana chloroplasts.</title>
        <authorList>
            <person name="Kasmati A.R."/>
            <person name="Toepel M."/>
            <person name="Patel R."/>
            <person name="Murtaza G."/>
            <person name="Jarvis P."/>
        </authorList>
    </citation>
    <scope>SUBCELLULAR LOCATION</scope>
    <scope>TISSUE SPECIFICITY</scope>
    <scope>DISRUPTION PHENOTYPE</scope>
</reference>
<reference key="10">
    <citation type="journal article" date="2010" name="Biochim. Biophys. Acta">
        <title>Protein import into chloroplasts: the Tic complex and its regulation.</title>
        <authorList>
            <person name="Kovacs-Bogdan E."/>
            <person name="Soll J."/>
            <person name="Bolter B."/>
        </authorList>
    </citation>
    <scope>REVIEW</scope>
</reference>
<reference key="11">
    <citation type="journal article" date="2013" name="Science">
        <title>Uncovering the protein translocon at the chloroplast inner envelope membrane.</title>
        <authorList>
            <person name="Kikuchi S."/>
            <person name="Bedard J."/>
            <person name="Hirano M."/>
            <person name="Hirabayashi Y."/>
            <person name="Oishi M."/>
            <person name="Imai M."/>
            <person name="Takase M."/>
            <person name="Ide T."/>
            <person name="Nakai M."/>
        </authorList>
    </citation>
    <scope>FUNCTION</scope>
    <scope>COMPONENT OF THE 1-MD COMPLEX</scope>
    <scope>SUBUNIT</scope>
    <scope>IDENTIFICATION BY MASS SPECTROMETRY</scope>
    <scope>SUBCELLULAR LOCATION</scope>
</reference>
<organism>
    <name type="scientific">Arabidopsis thaliana</name>
    <name type="common">Mouse-ear cress</name>
    <dbReference type="NCBI Taxonomy" id="3702"/>
    <lineage>
        <taxon>Eukaryota</taxon>
        <taxon>Viridiplantae</taxon>
        <taxon>Streptophyta</taxon>
        <taxon>Embryophyta</taxon>
        <taxon>Tracheophyta</taxon>
        <taxon>Spermatophyta</taxon>
        <taxon>Magnoliopsida</taxon>
        <taxon>eudicotyledons</taxon>
        <taxon>Gunneridae</taxon>
        <taxon>Pentapetalae</taxon>
        <taxon>rosids</taxon>
        <taxon>malvids</taxon>
        <taxon>Brassicales</taxon>
        <taxon>Brassicaceae</taxon>
        <taxon>Camelineae</taxon>
        <taxon>Arabidopsis</taxon>
    </lineage>
</organism>
<name>TI201_ARATH</name>
<accession>Q8GZ79</accession>
<accession>Q9MAU2</accession>
<evidence type="ECO:0000255" key="1"/>
<evidence type="ECO:0000269" key="2">
    <source>
    </source>
</evidence>
<evidence type="ECO:0000269" key="3">
    <source>
    </source>
</evidence>
<evidence type="ECO:0000269" key="4">
    <source>
    </source>
</evidence>
<evidence type="ECO:0000269" key="5">
    <source>
    </source>
</evidence>
<evidence type="ECO:0000269" key="6">
    <source>
    </source>
</evidence>
<evidence type="ECO:0000269" key="7">
    <source>
    </source>
</evidence>
<evidence type="ECO:0000269" key="8">
    <source>
    </source>
</evidence>
<evidence type="ECO:0000303" key="9">
    <source>
    </source>
</evidence>
<evidence type="ECO:0000305" key="10"/>
<evidence type="ECO:0000312" key="11">
    <source>
        <dbReference type="Araport" id="AT1G04940"/>
    </source>
</evidence>
<evidence type="ECO:0000312" key="12">
    <source>
        <dbReference type="EMBL" id="AAF40467.1"/>
    </source>
</evidence>
<evidence type="ECO:0007829" key="13">
    <source>
        <dbReference type="PDB" id="8Z9Y"/>
    </source>
</evidence>
<sequence>MITGYSTPSAHVLMSSRAFKSSSYRAAAGQTQHYLARSSLPVVKNSWGSPPSPFNELPRVSRGVPLSYLSASSSLLLNGEQGSLSGTLPVLPVRRKTLLTPRASKDVPSSFRFPPMTKKPQWWWRTLACLPYLMPLHETWMYAETAYHLHPFLEDFEFLTYPFLGAIGRLPSWFLMAYFFVAYLGIVRRKEWPHFFRFHVVMGMLLEIALQVIGTVSKWMPLGVYWGKFGMHFWTAVAFAYLFTVLESIRCALAGMYADIPFVCDAAYIQIPYD</sequence>
<gene>
    <name evidence="9" type="primary">TIC20-I</name>
    <name evidence="11" type="ordered locus">At1g04940</name>
    <name type="ORF">F13M7.5</name>
    <name evidence="12" type="ORF">F13M7.7</name>
</gene>
<proteinExistence type="evidence at protein level"/>
<dbReference type="EMBL" id="AC004809">
    <property type="protein sequence ID" value="AAF40467.1"/>
    <property type="status" value="ALT_SEQ"/>
    <property type="molecule type" value="Genomic_DNA"/>
</dbReference>
<dbReference type="EMBL" id="CP002684">
    <property type="protein sequence ID" value="AEE27765.1"/>
    <property type="molecule type" value="Genomic_DNA"/>
</dbReference>
<dbReference type="EMBL" id="AK117165">
    <property type="protein sequence ID" value="BAC41843.1"/>
    <property type="molecule type" value="mRNA"/>
</dbReference>
<dbReference type="PIR" id="H86182">
    <property type="entry name" value="H86182"/>
</dbReference>
<dbReference type="RefSeq" id="NP_171986.3">
    <property type="nucleotide sequence ID" value="NM_100372.5"/>
</dbReference>
<dbReference type="PDB" id="8Z9Y">
    <property type="method" value="EM"/>
    <property type="resolution" value="2.50 A"/>
    <property type="chains" value="B=1-274"/>
</dbReference>
<dbReference type="PDBsum" id="8Z9Y"/>
<dbReference type="EMDB" id="EMD-39872"/>
<dbReference type="SMR" id="Q8GZ79"/>
<dbReference type="FunCoup" id="Q8GZ79">
    <property type="interactions" value="783"/>
</dbReference>
<dbReference type="STRING" id="3702.Q8GZ79"/>
<dbReference type="TCDB" id="3.A.9.1.2">
    <property type="family name" value="the chloroplast envelope protein translocase (cept or tic-toc) family"/>
</dbReference>
<dbReference type="PaxDb" id="3702-AT1G04940.1"/>
<dbReference type="EnsemblPlants" id="AT1G04940.1">
    <property type="protein sequence ID" value="AT1G04940.1"/>
    <property type="gene ID" value="AT1G04940"/>
</dbReference>
<dbReference type="GeneID" id="839374"/>
<dbReference type="Gramene" id="AT1G04940.1">
    <property type="protein sequence ID" value="AT1G04940.1"/>
    <property type="gene ID" value="AT1G04940"/>
</dbReference>
<dbReference type="KEGG" id="ath:AT1G04940"/>
<dbReference type="Araport" id="AT1G04940"/>
<dbReference type="TAIR" id="AT1G04940">
    <property type="gene designation" value="TIC20-I"/>
</dbReference>
<dbReference type="eggNOG" id="ENOG502QT65">
    <property type="taxonomic scope" value="Eukaryota"/>
</dbReference>
<dbReference type="HOGENOM" id="CLU_052258_2_0_1"/>
<dbReference type="InParanoid" id="Q8GZ79"/>
<dbReference type="OMA" id="FFRFHTI"/>
<dbReference type="PhylomeDB" id="Q8GZ79"/>
<dbReference type="PRO" id="PR:Q8GZ79"/>
<dbReference type="Proteomes" id="UP000006548">
    <property type="component" value="Chromosome 1"/>
</dbReference>
<dbReference type="ExpressionAtlas" id="Q8GZ79">
    <property type="expression patterns" value="baseline and differential"/>
</dbReference>
<dbReference type="GO" id="GO:0009706">
    <property type="term" value="C:chloroplast inner membrane"/>
    <property type="evidence" value="ECO:0000314"/>
    <property type="project" value="TAIR"/>
</dbReference>
<dbReference type="GO" id="GO:0008320">
    <property type="term" value="F:protein transmembrane transporter activity"/>
    <property type="evidence" value="ECO:0000314"/>
    <property type="project" value="TAIR"/>
</dbReference>
<dbReference type="GO" id="GO:0045037">
    <property type="term" value="P:protein import into chloroplast stroma"/>
    <property type="evidence" value="ECO:0000314"/>
    <property type="project" value="TAIR"/>
</dbReference>
<dbReference type="InterPro" id="IPR005691">
    <property type="entry name" value="Tic20"/>
</dbReference>
<dbReference type="NCBIfam" id="TIGR00994">
    <property type="entry name" value="3a0901s05TIC20"/>
    <property type="match status" value="1"/>
</dbReference>
<dbReference type="PANTHER" id="PTHR33510:SF9">
    <property type="entry name" value="HIT-TYPE ZINC FINGER FAMILY PROTEIN-RELATED"/>
    <property type="match status" value="1"/>
</dbReference>
<dbReference type="PANTHER" id="PTHR33510">
    <property type="entry name" value="PROTEIN TIC 20-II, CHLOROPLASTIC"/>
    <property type="match status" value="1"/>
</dbReference>
<dbReference type="Pfam" id="PF16166">
    <property type="entry name" value="TIC20"/>
    <property type="match status" value="1"/>
</dbReference>
<protein>
    <recommendedName>
        <fullName evidence="9">Protein TIC 20-I, chloroplastic</fullName>
    </recommendedName>
    <alternativeName>
        <fullName evidence="9">Translocon at the inner envelope membrane of chloroplasts 20-I</fullName>
        <shortName evidence="9">AtTIC20-I</shortName>
    </alternativeName>
</protein>
<feature type="transit peptide" description="Chloroplast" evidence="1">
    <location>
        <begin position="1"/>
        <end position="65"/>
    </location>
</feature>
<feature type="chain" id="PRO_0000413663" description="Protein TIC 20-I, chloroplastic">
    <location>
        <begin position="66"/>
        <end position="274"/>
    </location>
</feature>
<feature type="transmembrane region" description="Helical" evidence="1">
    <location>
        <begin position="130"/>
        <end position="152"/>
    </location>
</feature>
<feature type="transmembrane region" description="Helical" evidence="1">
    <location>
        <begin position="167"/>
        <end position="187"/>
    </location>
</feature>
<feature type="transmembrane region" description="Helical" evidence="1">
    <location>
        <begin position="200"/>
        <end position="220"/>
    </location>
</feature>
<feature type="transmembrane region" description="Helical" evidence="1">
    <location>
        <begin position="229"/>
        <end position="249"/>
    </location>
</feature>
<feature type="helix" evidence="13">
    <location>
        <begin position="122"/>
        <end position="127"/>
    </location>
</feature>
<feature type="helix" evidence="13">
    <location>
        <begin position="130"/>
        <end position="132"/>
    </location>
</feature>
<feature type="helix" evidence="13">
    <location>
        <begin position="133"/>
        <end position="137"/>
    </location>
</feature>
<feature type="turn" evidence="13">
    <location>
        <begin position="138"/>
        <end position="142"/>
    </location>
</feature>
<feature type="helix" evidence="13">
    <location>
        <begin position="144"/>
        <end position="148"/>
    </location>
</feature>
<feature type="helix" evidence="13">
    <location>
        <begin position="152"/>
        <end position="166"/>
    </location>
</feature>
<feature type="helix" evidence="13">
    <location>
        <begin position="172"/>
        <end position="183"/>
    </location>
</feature>
<feature type="turn" evidence="13">
    <location>
        <begin position="184"/>
        <end position="186"/>
    </location>
</feature>
<feature type="strand" evidence="13">
    <location>
        <begin position="187"/>
        <end position="190"/>
    </location>
</feature>
<feature type="helix" evidence="13">
    <location>
        <begin position="194"/>
        <end position="204"/>
    </location>
</feature>
<feature type="helix" evidence="13">
    <location>
        <begin position="206"/>
        <end position="219"/>
    </location>
</feature>
<feature type="helix" evidence="13">
    <location>
        <begin position="222"/>
        <end position="225"/>
    </location>
</feature>
<feature type="helix" evidence="13">
    <location>
        <begin position="230"/>
        <end position="253"/>
    </location>
</feature>
<feature type="turn" evidence="13">
    <location>
        <begin position="261"/>
        <end position="263"/>
    </location>
</feature>
<feature type="helix" evidence="13">
    <location>
        <begin position="264"/>
        <end position="269"/>
    </location>
</feature>
<feature type="strand" evidence="13">
    <location>
        <begin position="270"/>
        <end position="272"/>
    </location>
</feature>
<comment type="function">
    <text evidence="2 5 6 8">Involved in protein precursor import into chloroplasts. May be part of an intermediate translocation complex acting as a protein-conducting channel at the inner envelope. Seems to be specific for photosynthesis-related pre-proteins. Partially redundant with TIC20-IV, but not with TIC20-II or TIC20-V.</text>
</comment>
<comment type="subunit">
    <text evidence="5 8">Part of the Tic complex. Component of the 1-MD complex, composed of TIC20-I, TIC214, TIC100 and TIC56 (PubMed:23372012). Interacts with the translocating preproteins. Hydrolysis of ATP is essential for the formation of this complex (PubMed:19531596, PubMed:23372012). The 1-MD complex interacts with TIC21 (PubMed:19531596).</text>
</comment>
<comment type="subcellular location">
    <subcellularLocation>
        <location evidence="2 7 8">Plastid</location>
        <location evidence="2 7 8">Chloroplast inner membrane</location>
        <topology evidence="2 7">Multi-pass membrane protein</topology>
    </subcellularLocation>
</comment>
<comment type="tissue specificity">
    <text evidence="2 3 6 7">Expressed in leaves, shoots and roots. High expression in mature photosynthetic tissues. Lower levels in non-photosynthetic tissues and roots.</text>
</comment>
<comment type="developmental stage">
    <text evidence="2">Highly expressed during germination and early development, with levels peaking at 25 days.</text>
</comment>
<comment type="disruption phenotype">
    <text evidence="4 5 6 7">Albino and seedling lethality. Tic20-I and tic20-IV double mutant is embryo lethal.</text>
</comment>
<comment type="similarity">
    <text evidence="10">Belongs to the Tic20 family.</text>
</comment>
<comment type="sequence caution" evidence="10">
    <conflict type="erroneous gene model prediction">
        <sequence resource="EMBL-CDS" id="AAF40467"/>
    </conflict>
</comment>